<proteinExistence type="inferred from homology"/>
<evidence type="ECO:0000255" key="1">
    <source>
        <dbReference type="HAMAP-Rule" id="MF_01013"/>
    </source>
</evidence>
<sequence length="257" mass="27535">MALAKRIIPCLDVDKGRVVKGVNFVDIRDAGDPVEVARRYNEQGADEITFLDITASSESRDTTYETVERMAAEVFIPLTVGGGVRTVDDIRKLLNAGADKVSINTAAVFNPEFVREAAERFGRQCIVVAIDAKRVSAAGEEPRWEIFTHGGRKPTGLDAVEWAKKMVELGAGELLLTSMDRDGTKIGFDLGLTRAISDAVVVPVIASGGVGELQHLADGVTQGGADAVLAASIFHFGQHTIPEAKAFMKAQGIEVRD</sequence>
<reference key="1">
    <citation type="journal article" date="2011" name="Appl. Environ. Microbiol.">
        <title>Genomic potential of Marinobacter aquaeolei, a biogeochemical 'opportunitroph'.</title>
        <authorList>
            <person name="Singer E."/>
            <person name="Webb E.A."/>
            <person name="Nelson W.C."/>
            <person name="Heidelberg J.F."/>
            <person name="Ivanova N."/>
            <person name="Pati A."/>
            <person name="Edwards K.J."/>
        </authorList>
    </citation>
    <scope>NUCLEOTIDE SEQUENCE [LARGE SCALE GENOMIC DNA]</scope>
    <source>
        <strain>ATCC 700491 / DSM 11845 / VT8</strain>
    </source>
</reference>
<feature type="chain" id="PRO_1000063081" description="Imidazole glycerol phosphate synthase subunit HisF">
    <location>
        <begin position="1"/>
        <end position="257"/>
    </location>
</feature>
<feature type="active site" evidence="1">
    <location>
        <position position="12"/>
    </location>
</feature>
<feature type="active site" evidence="1">
    <location>
        <position position="131"/>
    </location>
</feature>
<organism>
    <name type="scientific">Marinobacter nauticus (strain ATCC 700491 / DSM 11845 / VT8)</name>
    <name type="common">Marinobacter aquaeolei</name>
    <dbReference type="NCBI Taxonomy" id="351348"/>
    <lineage>
        <taxon>Bacteria</taxon>
        <taxon>Pseudomonadati</taxon>
        <taxon>Pseudomonadota</taxon>
        <taxon>Gammaproteobacteria</taxon>
        <taxon>Pseudomonadales</taxon>
        <taxon>Marinobacteraceae</taxon>
        <taxon>Marinobacter</taxon>
    </lineage>
</organism>
<gene>
    <name evidence="1" type="primary">hisF</name>
    <name type="ordered locus">Maqu_3170</name>
</gene>
<protein>
    <recommendedName>
        <fullName evidence="1">Imidazole glycerol phosphate synthase subunit HisF</fullName>
        <ecNumber evidence="1">4.3.2.10</ecNumber>
    </recommendedName>
    <alternativeName>
        <fullName evidence="1">IGP synthase cyclase subunit</fullName>
    </alternativeName>
    <alternativeName>
        <fullName evidence="1">IGP synthase subunit HisF</fullName>
    </alternativeName>
    <alternativeName>
        <fullName evidence="1">ImGP synthase subunit HisF</fullName>
        <shortName evidence="1">IGPS subunit HisF</shortName>
    </alternativeName>
</protein>
<name>HIS6_MARN8</name>
<accession>A1U5H5</accession>
<keyword id="KW-0028">Amino-acid biosynthesis</keyword>
<keyword id="KW-0963">Cytoplasm</keyword>
<keyword id="KW-0368">Histidine biosynthesis</keyword>
<keyword id="KW-0456">Lyase</keyword>
<dbReference type="EC" id="4.3.2.10" evidence="1"/>
<dbReference type="EMBL" id="CP000514">
    <property type="protein sequence ID" value="ABM20244.1"/>
    <property type="molecule type" value="Genomic_DNA"/>
</dbReference>
<dbReference type="RefSeq" id="WP_011786612.1">
    <property type="nucleotide sequence ID" value="NC_008740.1"/>
</dbReference>
<dbReference type="SMR" id="A1U5H5"/>
<dbReference type="STRING" id="351348.Maqu_3170"/>
<dbReference type="GeneID" id="31822479"/>
<dbReference type="KEGG" id="maq:Maqu_3170"/>
<dbReference type="eggNOG" id="COG0107">
    <property type="taxonomic scope" value="Bacteria"/>
</dbReference>
<dbReference type="HOGENOM" id="CLU_048577_4_0_6"/>
<dbReference type="OrthoDB" id="9781903at2"/>
<dbReference type="UniPathway" id="UPA00031">
    <property type="reaction ID" value="UER00010"/>
</dbReference>
<dbReference type="Proteomes" id="UP000000998">
    <property type="component" value="Chromosome"/>
</dbReference>
<dbReference type="GO" id="GO:0005737">
    <property type="term" value="C:cytoplasm"/>
    <property type="evidence" value="ECO:0007669"/>
    <property type="project" value="UniProtKB-SubCell"/>
</dbReference>
<dbReference type="GO" id="GO:0000107">
    <property type="term" value="F:imidazoleglycerol-phosphate synthase activity"/>
    <property type="evidence" value="ECO:0007669"/>
    <property type="project" value="UniProtKB-UniRule"/>
</dbReference>
<dbReference type="GO" id="GO:0016829">
    <property type="term" value="F:lyase activity"/>
    <property type="evidence" value="ECO:0007669"/>
    <property type="project" value="UniProtKB-KW"/>
</dbReference>
<dbReference type="GO" id="GO:0000105">
    <property type="term" value="P:L-histidine biosynthetic process"/>
    <property type="evidence" value="ECO:0007669"/>
    <property type="project" value="UniProtKB-UniRule"/>
</dbReference>
<dbReference type="CDD" id="cd04731">
    <property type="entry name" value="HisF"/>
    <property type="match status" value="1"/>
</dbReference>
<dbReference type="FunFam" id="3.20.20.70:FF:000006">
    <property type="entry name" value="Imidazole glycerol phosphate synthase subunit HisF"/>
    <property type="match status" value="1"/>
</dbReference>
<dbReference type="Gene3D" id="3.20.20.70">
    <property type="entry name" value="Aldolase class I"/>
    <property type="match status" value="1"/>
</dbReference>
<dbReference type="HAMAP" id="MF_01013">
    <property type="entry name" value="HisF"/>
    <property type="match status" value="1"/>
</dbReference>
<dbReference type="InterPro" id="IPR013785">
    <property type="entry name" value="Aldolase_TIM"/>
</dbReference>
<dbReference type="InterPro" id="IPR006062">
    <property type="entry name" value="His_biosynth"/>
</dbReference>
<dbReference type="InterPro" id="IPR004651">
    <property type="entry name" value="HisF"/>
</dbReference>
<dbReference type="InterPro" id="IPR050064">
    <property type="entry name" value="IGPS_HisA/HisF"/>
</dbReference>
<dbReference type="InterPro" id="IPR011060">
    <property type="entry name" value="RibuloseP-bd_barrel"/>
</dbReference>
<dbReference type="NCBIfam" id="TIGR00735">
    <property type="entry name" value="hisF"/>
    <property type="match status" value="1"/>
</dbReference>
<dbReference type="PANTHER" id="PTHR21235:SF2">
    <property type="entry name" value="IMIDAZOLE GLYCEROL PHOSPHATE SYNTHASE HISHF"/>
    <property type="match status" value="1"/>
</dbReference>
<dbReference type="PANTHER" id="PTHR21235">
    <property type="entry name" value="IMIDAZOLE GLYCEROL PHOSPHATE SYNTHASE SUBUNIT HISF/H IGP SYNTHASE SUBUNIT HISF/H"/>
    <property type="match status" value="1"/>
</dbReference>
<dbReference type="Pfam" id="PF00977">
    <property type="entry name" value="His_biosynth"/>
    <property type="match status" value="1"/>
</dbReference>
<dbReference type="SUPFAM" id="SSF51366">
    <property type="entry name" value="Ribulose-phoshate binding barrel"/>
    <property type="match status" value="1"/>
</dbReference>
<comment type="function">
    <text evidence="1">IGPS catalyzes the conversion of PRFAR and glutamine to IGP, AICAR and glutamate. The HisF subunit catalyzes the cyclization activity that produces IGP and AICAR from PRFAR using the ammonia provided by the HisH subunit.</text>
</comment>
<comment type="catalytic activity">
    <reaction evidence="1">
        <text>5-[(5-phospho-1-deoxy-D-ribulos-1-ylimino)methylamino]-1-(5-phospho-beta-D-ribosyl)imidazole-4-carboxamide + L-glutamine = D-erythro-1-(imidazol-4-yl)glycerol 3-phosphate + 5-amino-1-(5-phospho-beta-D-ribosyl)imidazole-4-carboxamide + L-glutamate + H(+)</text>
        <dbReference type="Rhea" id="RHEA:24793"/>
        <dbReference type="ChEBI" id="CHEBI:15378"/>
        <dbReference type="ChEBI" id="CHEBI:29985"/>
        <dbReference type="ChEBI" id="CHEBI:58278"/>
        <dbReference type="ChEBI" id="CHEBI:58359"/>
        <dbReference type="ChEBI" id="CHEBI:58475"/>
        <dbReference type="ChEBI" id="CHEBI:58525"/>
        <dbReference type="EC" id="4.3.2.10"/>
    </reaction>
</comment>
<comment type="pathway">
    <text evidence="1">Amino-acid biosynthesis; L-histidine biosynthesis; L-histidine from 5-phospho-alpha-D-ribose 1-diphosphate: step 5/9.</text>
</comment>
<comment type="subunit">
    <text evidence="1">Heterodimer of HisH and HisF.</text>
</comment>
<comment type="subcellular location">
    <subcellularLocation>
        <location evidence="1">Cytoplasm</location>
    </subcellularLocation>
</comment>
<comment type="similarity">
    <text evidence="1">Belongs to the HisA/HisF family.</text>
</comment>